<reference evidence="6 7" key="1">
    <citation type="journal article" date="2007" name="J. Agric. Food Chem.">
        <title>Molecular cloning and characterization of the gene encoding cold-active beta-galactosidase from a psychrotrophic and halotolerant Planococcus sp. L4.</title>
        <authorList>
            <person name="Hu J.M."/>
            <person name="Li H."/>
            <person name="Cao L.X."/>
            <person name="Wu P.C."/>
            <person name="Zhang C.T."/>
            <person name="Sang S.L."/>
            <person name="Zhang X.Y."/>
            <person name="Chen M.J."/>
            <person name="Lu J.Q."/>
            <person name="Liu Y.H."/>
        </authorList>
    </citation>
    <scope>NUCLEOTIDE SEQUENCE [GENOMIC DNA]</scope>
    <scope>FUNCTION</scope>
    <scope>CATALYTIC ACTIVITY</scope>
    <scope>ACTIVITY REGULATION</scope>
    <scope>BIOPHYSICOCHEMICAL PROPERTIES</scope>
    <scope>SUBSTRATE SPECIFICITY</scope>
    <scope>SUBUNIT</scope>
    <scope>BIOTECHNOLOGY</scope>
    <source>
        <strain evidence="7">L4</strain>
    </source>
</reference>
<sequence>MINDKLPKIWHGGDYNPEQWDSQEIWDEDVRMFKLAGIDVATLNVFSWALNQPNEDTYNFEWLDDKINRLYENGIYTCLATSTAAHPAWMAKKYPDVLRVDFYGRKRKFGSRHNSCPNSPTYREYSEKIADKLAERYKDHPAVLIWHVSNEYGGYCYCDNCQDAFRVWLSDKYGTLEKLNKAWNTGFWGHTFYEWDEIVAPNMLSEEREDNVSDFQGISLDYRRFQSDSLLDCYKLEYNAIRKHTPNIPITTNLMGTYPMLDYFKWAKEMDVVSWDNYPAIDTPFSYTAMTHDLMRGLKSGQPFMLMEQTPSQQNWQPYNSLKRPGVMRLWSYQAIGRGADTILYFQLRRSVGACEKYHGAVIEHVGHEHTRVFNEVAQIGKEFNQLGDTLLDARVNARVAIVFDWENRWATELSSGPSVSLDYVNEVHKYYDALYKLNVQVDMVGVEEDLSQYDVVIAPVLYMVKEGYAAKVESFVENGGTFITTFFSGIVNETDIVTLGGYPGELRKVLGIWAEEIDALHPDETNEIVVNGSRGSLSGSYSCNLLFDLIHTEGAQAVAEYGSDFYQGMPVLTVNEFGKGKAWYVASSPDAEFLVDFLQTVCEEAGVEPLLSVPEGVETTERVKDGQTYLFVLNHNNKVESIDLKDSQYQELLSTQQLSGTVELEAKGVFILAKV</sequence>
<evidence type="ECO:0000250" key="1">
    <source>
        <dbReference type="UniProtKB" id="O69315"/>
    </source>
</evidence>
<evidence type="ECO:0000250" key="2">
    <source>
        <dbReference type="UniProtKB" id="P19668"/>
    </source>
</evidence>
<evidence type="ECO:0000255" key="3"/>
<evidence type="ECO:0000269" key="4">
    <source>
    </source>
</evidence>
<evidence type="ECO:0000303" key="5">
    <source>
    </source>
</evidence>
<evidence type="ECO:0000305" key="6"/>
<evidence type="ECO:0000312" key="7">
    <source>
        <dbReference type="EMBL" id="ABI64125.1"/>
    </source>
</evidence>
<gene>
    <name evidence="5" type="primary">bgaP</name>
    <name evidence="5" type="synonym">galP</name>
</gene>
<dbReference type="EC" id="3.2.1.23"/>
<dbReference type="EMBL" id="DQ899950">
    <property type="protein sequence ID" value="ABI64125.1"/>
    <property type="molecule type" value="Genomic_DNA"/>
</dbReference>
<dbReference type="SMR" id="Q09HN2"/>
<dbReference type="CAZy" id="GH42">
    <property type="family name" value="Glycoside Hydrolase Family 42"/>
</dbReference>
<dbReference type="BRENDA" id="3.2.1.23">
    <property type="organism ID" value="15705"/>
</dbReference>
<dbReference type="GO" id="GO:0009341">
    <property type="term" value="C:beta-galactosidase complex"/>
    <property type="evidence" value="ECO:0007669"/>
    <property type="project" value="InterPro"/>
</dbReference>
<dbReference type="GO" id="GO:0004565">
    <property type="term" value="F:beta-galactosidase activity"/>
    <property type="evidence" value="ECO:0007669"/>
    <property type="project" value="UniProtKB-EC"/>
</dbReference>
<dbReference type="GO" id="GO:0046872">
    <property type="term" value="F:metal ion binding"/>
    <property type="evidence" value="ECO:0007669"/>
    <property type="project" value="UniProtKB-KW"/>
</dbReference>
<dbReference type="GO" id="GO:0006012">
    <property type="term" value="P:galactose metabolic process"/>
    <property type="evidence" value="ECO:0007669"/>
    <property type="project" value="InterPro"/>
</dbReference>
<dbReference type="CDD" id="cd03143">
    <property type="entry name" value="A4_beta-galactosidase_middle_domain"/>
    <property type="match status" value="1"/>
</dbReference>
<dbReference type="Gene3D" id="3.40.50.880">
    <property type="match status" value="1"/>
</dbReference>
<dbReference type="Gene3D" id="3.20.20.80">
    <property type="entry name" value="Glycosidases"/>
    <property type="match status" value="1"/>
</dbReference>
<dbReference type="Gene3D" id="2.60.40.1180">
    <property type="entry name" value="Golgi alpha-mannosidase II"/>
    <property type="match status" value="1"/>
</dbReference>
<dbReference type="InterPro" id="IPR013739">
    <property type="entry name" value="Beta_galactosidase_C"/>
</dbReference>
<dbReference type="InterPro" id="IPR013738">
    <property type="entry name" value="Beta_galactosidase_Trimer"/>
</dbReference>
<dbReference type="InterPro" id="IPR029062">
    <property type="entry name" value="Class_I_gatase-like"/>
</dbReference>
<dbReference type="InterPro" id="IPR003476">
    <property type="entry name" value="Glyco_hydro_42"/>
</dbReference>
<dbReference type="InterPro" id="IPR013529">
    <property type="entry name" value="Glyco_hydro_42_N"/>
</dbReference>
<dbReference type="InterPro" id="IPR013780">
    <property type="entry name" value="Glyco_hydro_b"/>
</dbReference>
<dbReference type="InterPro" id="IPR017853">
    <property type="entry name" value="Glycoside_hydrolase_SF"/>
</dbReference>
<dbReference type="PANTHER" id="PTHR36447">
    <property type="entry name" value="BETA-GALACTOSIDASE GANA"/>
    <property type="match status" value="1"/>
</dbReference>
<dbReference type="PANTHER" id="PTHR36447:SF1">
    <property type="entry name" value="BETA-GALACTOSIDASE GANA"/>
    <property type="match status" value="1"/>
</dbReference>
<dbReference type="Pfam" id="PF02449">
    <property type="entry name" value="Glyco_hydro_42"/>
    <property type="match status" value="1"/>
</dbReference>
<dbReference type="Pfam" id="PF08533">
    <property type="entry name" value="Glyco_hydro_42C"/>
    <property type="match status" value="1"/>
</dbReference>
<dbReference type="Pfam" id="PF08532">
    <property type="entry name" value="Glyco_hydro_42M"/>
    <property type="match status" value="1"/>
</dbReference>
<dbReference type="PIRSF" id="PIRSF001084">
    <property type="entry name" value="B-galactosidase"/>
    <property type="match status" value="1"/>
</dbReference>
<dbReference type="SUPFAM" id="SSF51445">
    <property type="entry name" value="(Trans)glycosidases"/>
    <property type="match status" value="1"/>
</dbReference>
<dbReference type="SUPFAM" id="SSF52317">
    <property type="entry name" value="Class I glutamine amidotransferase-like"/>
    <property type="match status" value="1"/>
</dbReference>
<accession>Q09HN2</accession>
<keyword id="KW-0326">Glycosidase</keyword>
<keyword id="KW-0378">Hydrolase</keyword>
<keyword id="KW-0479">Metal-binding</keyword>
<keyword id="KW-0862">Zinc</keyword>
<organism>
    <name type="scientific">Planococcus sp. (strain L4)</name>
    <dbReference type="NCBI Taxonomy" id="377621"/>
    <lineage>
        <taxon>Bacteria</taxon>
        <taxon>Bacillati</taxon>
        <taxon>Bacillota</taxon>
        <taxon>Bacilli</taxon>
        <taxon>Bacillales</taxon>
        <taxon>Caryophanaceae</taxon>
        <taxon>Planococcus</taxon>
    </lineage>
</organism>
<protein>
    <recommendedName>
        <fullName>Beta-galactosidase BgaP</fullName>
        <shortName evidence="2">Beta-gal</shortName>
        <ecNumber>3.2.1.23</ecNumber>
    </recommendedName>
</protein>
<comment type="function">
    <text evidence="4">Hydrolyzes lactose, o-nitrophenyl-beta-D-galactopyranoside (ONPG), p-nitrophenyl-beta-D-galactopyranoside (PNPG), 5-bromo-4-chloro-3-indolyl-beta-D-galactopyranoside (X-gal), o-nitrophenyl-beta-D-fucopyranoside, p-nitrophenyl-beta-D-mannoside, o-nitrophenyl-beta-D-glucoside, p-nitrophenyl-beta-D-xyloside, p-nitrophenyl-beta-D-cellobioside, p-nitrophenyl-beta-D-arabinoside, p-nitrophenyl-beta-D-lactoside, p-nitrophenyl-beta-D-galacturonide, p-nitrophenyl-beta-D-glucuronide and p-nitrophenyl-alpha-D-galactoside with highest level of activity with ONPG as substrate, intermediate level of activity with PNPG and lower levels of activity with all other chromogenic nitrophenyl analogs. Able to hydrolyze 34% of milk lactose after 60 minutes at 5 degrees Celsius.</text>
</comment>
<comment type="catalytic activity">
    <reaction evidence="4">
        <text>Hydrolysis of terminal non-reducing beta-D-galactose residues in beta-D-galactosides.</text>
        <dbReference type="EC" id="3.2.1.23"/>
    </reaction>
</comment>
<comment type="activity regulation">
    <text evidence="4">No activity lost during treatment with 100 mM EDTA after 2 hours, and the addition of 1 mM MgCl(2), 1 mM CaCl(2) or 1 mM MnCl(2) has no effect. However, the enzyme activity is inhibited by Zn(2+), Cu(2+), Ni(2+) and Co(2+) to different extents. Addition of Na(+) or K(+) slightly stimulates the enzyme activity at low concentrations and the optimal concentration is 250 mM. A further increase of their concentration of ions above the optimum value results in a decrease in enzyme activity. The enzyme is still active even in the presence of Na(+) or K(+) at a concentration up to 5 M.</text>
</comment>
<comment type="biophysicochemical properties">
    <kinetics>
        <KM evidence="4">5.4 mM for ONPG (at 5 degrees Celsius and at pH 6.8)</KM>
        <KM evidence="4">3.8 mM for ONPG (at 10 degrees Celsius and at pH 6.8)</KM>
        <KM evidence="4">2.9 mM for ONPG (at 20 degrees Celsius and at pH 6.8)</KM>
        <KM evidence="4">20.4 mM for lactose (at 5 degrees Celsius and at pH 6.8)</KM>
        <KM evidence="4">11.2 mM for lactose (at 10 degrees Celsius and at pH 6.8)</KM>
        <KM evidence="4">10.4 mM for lactose (at 20 degrees Celsius and at pH 6.8)</KM>
    </kinetics>
    <phDependence>
        <text evidence="4">Optimum pH is 6.8. Exhibits above 80% of its maximal activity in the pH range 6.0-8.0 using ONPG as substrate at 20 degrees Celsius.</text>
    </phDependence>
    <temperatureDependence>
        <text evidence="4">Optimum temperature is 20 degrees Celsius. Lowering or raising the temperature from 20 degrees Celsius results in reduction of activity when ONPG is used as substrate. Rather stable at or below 25 degrees Celsius, but loses 58% of activity after 30 minutes at 40 degrees Celsius. Loses all activity in only 10 minutes at 45 degrees Celsius. Exhibits 27% of maximal activity even at 0 degrees Celsius, but enzyme activity decreases with a further increase in temperature until it is undetectable above 50 degrees Celsius.</text>
    </temperatureDependence>
</comment>
<comment type="subunit">
    <text evidence="4">Homodimer.</text>
</comment>
<comment type="biotechnology">
    <text evidence="4">Could conceivably be developed to fulfill the practical requirements to enable its use for lactose removal in milk and dairy products at low temperature or a reporter enzyme for psychrophilic genetic systems.</text>
</comment>
<comment type="similarity">
    <text evidence="3">Belongs to the glycosyl hydrolase 42 family.</text>
</comment>
<proteinExistence type="evidence at protein level"/>
<name>BGAL_PLASL</name>
<feature type="chain" id="PRO_0000407693" description="Beta-galactosidase BgaP">
    <location>
        <begin position="1"/>
        <end position="676"/>
    </location>
</feature>
<feature type="active site" description="Proton donor" evidence="1">
    <location>
        <position position="151"/>
    </location>
</feature>
<feature type="active site" description="Nucleophile" evidence="1">
    <location>
        <position position="308"/>
    </location>
</feature>
<feature type="binding site" evidence="1">
    <location>
        <position position="112"/>
    </location>
    <ligand>
        <name>substrate</name>
    </ligand>
</feature>
<feature type="binding site" evidence="1">
    <location>
        <position position="116"/>
    </location>
    <ligand>
        <name>Zn(2+)</name>
        <dbReference type="ChEBI" id="CHEBI:29105"/>
    </ligand>
</feature>
<feature type="binding site" evidence="1">
    <location>
        <position position="150"/>
    </location>
    <ligand>
        <name>substrate</name>
    </ligand>
</feature>
<feature type="binding site" evidence="1">
    <location>
        <position position="156"/>
    </location>
    <ligand>
        <name>Zn(2+)</name>
        <dbReference type="ChEBI" id="CHEBI:29105"/>
    </ligand>
</feature>
<feature type="binding site" evidence="1">
    <location>
        <position position="158"/>
    </location>
    <ligand>
        <name>Zn(2+)</name>
        <dbReference type="ChEBI" id="CHEBI:29105"/>
    </ligand>
</feature>
<feature type="binding site" evidence="1">
    <location>
        <position position="161"/>
    </location>
    <ligand>
        <name>Zn(2+)</name>
        <dbReference type="ChEBI" id="CHEBI:29105"/>
    </ligand>
</feature>
<feature type="binding site" evidence="1">
    <location>
        <position position="316"/>
    </location>
    <ligand>
        <name>substrate</name>
    </ligand>
</feature>
<feature type="binding site" evidence="1">
    <location>
        <begin position="356"/>
        <end position="359"/>
    </location>
    <ligand>
        <name>substrate</name>
    </ligand>
</feature>